<keyword id="KW-0884">PQQ biosynthesis</keyword>
<keyword id="KW-1185">Reference proteome</keyword>
<keyword id="KW-0813">Transport</keyword>
<reference key="1">
    <citation type="journal article" date="2005" name="Nucleic Acids Res.">
        <title>The genome sequence of Xanthomonas oryzae pathovar oryzae KACC10331, the bacterial blight pathogen of rice.</title>
        <authorList>
            <person name="Lee B.-M."/>
            <person name="Park Y.-J."/>
            <person name="Park D.-S."/>
            <person name="Kang H.-W."/>
            <person name="Kim J.-G."/>
            <person name="Song E.-S."/>
            <person name="Park I.-C."/>
            <person name="Yoon U.-H."/>
            <person name="Hahn J.-H."/>
            <person name="Koo B.-S."/>
            <person name="Lee G.-B."/>
            <person name="Kim H."/>
            <person name="Park H.-S."/>
            <person name="Yoon K.-O."/>
            <person name="Kim J.-H."/>
            <person name="Jung C.-H."/>
            <person name="Koh N.-H."/>
            <person name="Seo J.-S."/>
            <person name="Go S.-J."/>
        </authorList>
    </citation>
    <scope>NUCLEOTIDE SEQUENCE [LARGE SCALE GENOMIC DNA]</scope>
    <source>
        <strain>KACC10331 / KXO85</strain>
    </source>
</reference>
<sequence>MRIIVLGSAAGGGHPQWNCHTPASLRAWQQADGAQRRTQASIAVSADGERWVLINASPDFRQQILATPALWPQQGLRHSPIKAVLLTSGEIDHIAGLLSMRESQPFALHASRRVLDLLAQNPIFDAVNPQYVSRQPFTLNAPLTVSGLQLTPFSVPGKVPLFMESRSGGDLAGSQEETLGLTIDDSQHRVHYIPGCAAMTDALRARLHGAELVFFDGTLWRDDEMVQLGISQKTGQRMGHMSIDGPEGTIAAFAPLNVARKIFIHLNTTNPVLNTQSPEFATARASGWEVAHDGLEIAL</sequence>
<proteinExistence type="inferred from homology"/>
<evidence type="ECO:0000255" key="1">
    <source>
        <dbReference type="HAMAP-Rule" id="MF_00653"/>
    </source>
</evidence>
<accession>Q5H232</accession>
<organism>
    <name type="scientific">Xanthomonas oryzae pv. oryzae (strain KACC10331 / KXO85)</name>
    <dbReference type="NCBI Taxonomy" id="291331"/>
    <lineage>
        <taxon>Bacteria</taxon>
        <taxon>Pseudomonadati</taxon>
        <taxon>Pseudomonadota</taxon>
        <taxon>Gammaproteobacteria</taxon>
        <taxon>Lysobacterales</taxon>
        <taxon>Lysobacteraceae</taxon>
        <taxon>Xanthomonas</taxon>
    </lineage>
</organism>
<name>PQQB_XANOR</name>
<gene>
    <name evidence="1" type="primary">pqqB</name>
    <name type="ordered locus">XOO1735</name>
</gene>
<dbReference type="EMBL" id="AE013598">
    <property type="protein sequence ID" value="AAW74989.1"/>
    <property type="molecule type" value="Genomic_DNA"/>
</dbReference>
<dbReference type="SMR" id="Q5H232"/>
<dbReference type="STRING" id="291331.XOO1735"/>
<dbReference type="KEGG" id="xoo:XOO1735"/>
<dbReference type="PATRIC" id="fig|291331.8.peg.1934"/>
<dbReference type="HOGENOM" id="CLU_061120_0_0_6"/>
<dbReference type="UniPathway" id="UPA00539"/>
<dbReference type="Proteomes" id="UP000006735">
    <property type="component" value="Chromosome"/>
</dbReference>
<dbReference type="GO" id="GO:0018189">
    <property type="term" value="P:pyrroloquinoline quinone biosynthetic process"/>
    <property type="evidence" value="ECO:0007669"/>
    <property type="project" value="UniProtKB-UniRule"/>
</dbReference>
<dbReference type="CDD" id="cd16274">
    <property type="entry name" value="PQQB-like_MBL-fold"/>
    <property type="match status" value="1"/>
</dbReference>
<dbReference type="Gene3D" id="3.60.15.10">
    <property type="entry name" value="Ribonuclease Z/Hydroxyacylglutathione hydrolase-like"/>
    <property type="match status" value="1"/>
</dbReference>
<dbReference type="HAMAP" id="MF_00653">
    <property type="entry name" value="PQQ_syn_PqqB"/>
    <property type="match status" value="1"/>
</dbReference>
<dbReference type="InterPro" id="IPR001279">
    <property type="entry name" value="Metallo-B-lactamas"/>
</dbReference>
<dbReference type="InterPro" id="IPR011842">
    <property type="entry name" value="PQQ_synth_PqqB"/>
</dbReference>
<dbReference type="InterPro" id="IPR036866">
    <property type="entry name" value="RibonucZ/Hydroxyglut_hydro"/>
</dbReference>
<dbReference type="NCBIfam" id="TIGR02108">
    <property type="entry name" value="PQQ_syn_pqqB"/>
    <property type="match status" value="1"/>
</dbReference>
<dbReference type="PANTHER" id="PTHR42663:SF7">
    <property type="entry name" value="COENZYME PQQ SYNTHESIS PROTEIN B"/>
    <property type="match status" value="1"/>
</dbReference>
<dbReference type="PANTHER" id="PTHR42663">
    <property type="entry name" value="HYDROLASE C777.06C-RELATED-RELATED"/>
    <property type="match status" value="1"/>
</dbReference>
<dbReference type="Pfam" id="PF12706">
    <property type="entry name" value="Lactamase_B_2"/>
    <property type="match status" value="1"/>
</dbReference>
<dbReference type="SUPFAM" id="SSF56281">
    <property type="entry name" value="Metallo-hydrolase/oxidoreductase"/>
    <property type="match status" value="1"/>
</dbReference>
<feature type="chain" id="PRO_1000061665" description="Coenzyme PQQ synthesis protein B">
    <location>
        <begin position="1"/>
        <end position="299"/>
    </location>
</feature>
<comment type="function">
    <text evidence="1">May be involved in the transport of PQQ or its precursor to the periplasm.</text>
</comment>
<comment type="pathway">
    <text evidence="1">Cofactor biosynthesis; pyrroloquinoline quinone biosynthesis.</text>
</comment>
<comment type="similarity">
    <text evidence="1">Belongs to the PqqB family.</text>
</comment>
<protein>
    <recommendedName>
        <fullName evidence="1">Coenzyme PQQ synthesis protein B</fullName>
    </recommendedName>
    <alternativeName>
        <fullName evidence="1">Pyrroloquinoline quinone biosynthesis protein B</fullName>
    </alternativeName>
</protein>